<reference key="1">
    <citation type="submission" date="1996-05" db="EMBL/GenBank/DDBJ databases">
        <title>Genes encoding the alpha subunit of carboxyltransferase of the acetyl-CoA carboxylase complex and GTP cyclohydrolase I from cyanobacterium Synechococcus sp. PCC 7942.</title>
        <authorList>
            <person name="Phung L.T."/>
            <person name="Haselkorn R."/>
        </authorList>
    </citation>
    <scope>NUCLEOTIDE SEQUENCE [GENOMIC DNA]</scope>
</reference>
<reference key="2">
    <citation type="submission" date="2002-06" db="EMBL/GenBank/DDBJ databases">
        <title>Synechococcus elongatus PCC7942 cosmid 6C3.</title>
        <authorList>
            <person name="Holtman C.K."/>
            <person name="Sandoval P."/>
            <person name="Chen Y."/>
            <person name="Socias T."/>
            <person name="Mohler B.J."/>
            <person name="Gonzalez A."/>
            <person name="Salinas I."/>
            <person name="McMurtry S."/>
            <person name="Golden S.S."/>
            <person name="Youderian P."/>
        </authorList>
    </citation>
    <scope>NUCLEOTIDE SEQUENCE [GENOMIC DNA]</scope>
</reference>
<reference key="3">
    <citation type="submission" date="2005-08" db="EMBL/GenBank/DDBJ databases">
        <title>Complete sequence of chromosome 1 of Synechococcus elongatus PCC 7942.</title>
        <authorList>
            <consortium name="US DOE Joint Genome Institute"/>
            <person name="Copeland A."/>
            <person name="Lucas S."/>
            <person name="Lapidus A."/>
            <person name="Barry K."/>
            <person name="Detter J.C."/>
            <person name="Glavina T."/>
            <person name="Hammon N."/>
            <person name="Israni S."/>
            <person name="Pitluck S."/>
            <person name="Schmutz J."/>
            <person name="Larimer F."/>
            <person name="Land M."/>
            <person name="Kyrpides N."/>
            <person name="Lykidis A."/>
            <person name="Golden S."/>
            <person name="Richardson P."/>
        </authorList>
    </citation>
    <scope>NUCLEOTIDE SEQUENCE [LARGE SCALE GENOMIC DNA]</scope>
    <source>
        <strain>ATCC 33912 / PCC 7942 / FACHB-805</strain>
    </source>
</reference>
<keyword id="KW-1185">Reference proteome</keyword>
<keyword id="KW-0677">Repeat</keyword>
<keyword id="KW-0687">Ribonucleoprotein</keyword>
<keyword id="KW-0689">Ribosomal protein</keyword>
<keyword id="KW-0694">RNA-binding</keyword>
<proteinExistence type="inferred from homology"/>
<name>RS1_SYNE7</name>
<comment type="function">
    <text>Binds mRNA.</text>
</comment>
<comment type="similarity">
    <text evidence="2">Belongs to the bacterial ribosomal protein bS1 family.</text>
</comment>
<gene>
    <name type="primary">rpsA</name>
    <name type="synonym">rps1</name>
    <name type="ordered locus">Synpcc7942_1591</name>
    <name type="ORF">sed0025</name>
</gene>
<evidence type="ECO:0000255" key="1">
    <source>
        <dbReference type="PROSITE-ProRule" id="PRU00180"/>
    </source>
</evidence>
<evidence type="ECO:0000305" key="2"/>
<accession>O33698</accession>
<accession>Q31MU8</accession>
<accession>Q79PG4</accession>
<feature type="chain" id="PRO_0000196057" description="Small ribosomal subunit protein bS1">
    <location>
        <begin position="1"/>
        <end position="295"/>
    </location>
</feature>
<feature type="domain" description="S1 motif 1" evidence="1">
    <location>
        <begin position="28"/>
        <end position="97"/>
    </location>
</feature>
<feature type="domain" description="S1 motif 2" evidence="1">
    <location>
        <begin position="115"/>
        <end position="179"/>
    </location>
</feature>
<feature type="domain" description="S1 motif 3" evidence="1">
    <location>
        <begin position="193"/>
        <end position="261"/>
    </location>
</feature>
<protein>
    <recommendedName>
        <fullName evidence="2">Small ribosomal subunit protein bS1</fullName>
    </recommendedName>
    <alternativeName>
        <fullName>30S ribosomal protein S1</fullName>
    </alternativeName>
</protein>
<sequence>MSPSAANTPSYDDFALALEAQSLDSQKGQLVRGKVCEYSTDGAYIDIGGKAPAFLPKREAALHAVLDLEAHLPKDEELEFLVIRDQNEDGQVTVSLRALALEQAWTRVAELQEGGQTVQVKVTGSNKGGVTADLEGLRAFIPRSHLNEKEDLDSLKGKTLTVAFLEVNRADKKLVLSERQAARTALVREIEVGQLINGKVTGLKPFGVFVDLGGATALLPINQISQKFVADVGAIFKIGDPIQALVVAIDNTKGRISLSTKVLENHPGEILENVAELQASAADRAERARKQLESQ</sequence>
<dbReference type="EMBL" id="U59236">
    <property type="protein sequence ID" value="AAB82045.1"/>
    <property type="molecule type" value="Genomic_DNA"/>
</dbReference>
<dbReference type="EMBL" id="AY120852">
    <property type="protein sequence ID" value="AAM82650.1"/>
    <property type="molecule type" value="Genomic_DNA"/>
</dbReference>
<dbReference type="EMBL" id="CP000100">
    <property type="protein sequence ID" value="ABB57621.1"/>
    <property type="molecule type" value="Genomic_DNA"/>
</dbReference>
<dbReference type="RefSeq" id="WP_011242361.1">
    <property type="nucleotide sequence ID" value="NZ_JACJTX010000004.1"/>
</dbReference>
<dbReference type="SMR" id="O33698"/>
<dbReference type="STRING" id="1140.Synpcc7942_1591"/>
<dbReference type="PaxDb" id="1140-Synpcc7942_1591"/>
<dbReference type="KEGG" id="syf:Synpcc7942_1591"/>
<dbReference type="eggNOG" id="COG0539">
    <property type="taxonomic scope" value="Bacteria"/>
</dbReference>
<dbReference type="HOGENOM" id="CLU_015805_0_1_3"/>
<dbReference type="OrthoDB" id="9804077at2"/>
<dbReference type="BioCyc" id="SYNEL:SYNPCC7942_1591-MONOMER"/>
<dbReference type="Proteomes" id="UP000889800">
    <property type="component" value="Chromosome"/>
</dbReference>
<dbReference type="GO" id="GO:1990904">
    <property type="term" value="C:ribonucleoprotein complex"/>
    <property type="evidence" value="ECO:0007669"/>
    <property type="project" value="UniProtKB-KW"/>
</dbReference>
<dbReference type="GO" id="GO:0005840">
    <property type="term" value="C:ribosome"/>
    <property type="evidence" value="ECO:0007669"/>
    <property type="project" value="UniProtKB-KW"/>
</dbReference>
<dbReference type="GO" id="GO:0003729">
    <property type="term" value="F:mRNA binding"/>
    <property type="evidence" value="ECO:0007669"/>
    <property type="project" value="TreeGrafter"/>
</dbReference>
<dbReference type="GO" id="GO:0003735">
    <property type="term" value="F:structural constituent of ribosome"/>
    <property type="evidence" value="ECO:0007669"/>
    <property type="project" value="TreeGrafter"/>
</dbReference>
<dbReference type="GO" id="GO:0006412">
    <property type="term" value="P:translation"/>
    <property type="evidence" value="ECO:0007669"/>
    <property type="project" value="TreeGrafter"/>
</dbReference>
<dbReference type="CDD" id="cd04465">
    <property type="entry name" value="S1_RPS1_repeat_ec2_hs2"/>
    <property type="match status" value="1"/>
</dbReference>
<dbReference type="Gene3D" id="2.40.50.140">
    <property type="entry name" value="Nucleic acid-binding proteins"/>
    <property type="match status" value="3"/>
</dbReference>
<dbReference type="InterPro" id="IPR012340">
    <property type="entry name" value="NA-bd_OB-fold"/>
</dbReference>
<dbReference type="InterPro" id="IPR050437">
    <property type="entry name" value="Ribos_protein_bS1-like"/>
</dbReference>
<dbReference type="InterPro" id="IPR035104">
    <property type="entry name" value="Ribosomal_protein_S1-like"/>
</dbReference>
<dbReference type="InterPro" id="IPR003029">
    <property type="entry name" value="S1_domain"/>
</dbReference>
<dbReference type="PANTHER" id="PTHR10724">
    <property type="entry name" value="30S RIBOSOMAL PROTEIN S1"/>
    <property type="match status" value="1"/>
</dbReference>
<dbReference type="PANTHER" id="PTHR10724:SF7">
    <property type="entry name" value="SMALL RIBOSOMAL SUBUNIT PROTEIN BS1C"/>
    <property type="match status" value="1"/>
</dbReference>
<dbReference type="Pfam" id="PF00575">
    <property type="entry name" value="S1"/>
    <property type="match status" value="3"/>
</dbReference>
<dbReference type="PRINTS" id="PR00681">
    <property type="entry name" value="RIBOSOMALS1"/>
</dbReference>
<dbReference type="SMART" id="SM00316">
    <property type="entry name" value="S1"/>
    <property type="match status" value="3"/>
</dbReference>
<dbReference type="SUPFAM" id="SSF50249">
    <property type="entry name" value="Nucleic acid-binding proteins"/>
    <property type="match status" value="3"/>
</dbReference>
<dbReference type="PROSITE" id="PS50126">
    <property type="entry name" value="S1"/>
    <property type="match status" value="3"/>
</dbReference>
<organism>
    <name type="scientific">Synechococcus elongatus (strain ATCC 33912 / PCC 7942 / FACHB-805)</name>
    <name type="common">Anacystis nidulans R2</name>
    <dbReference type="NCBI Taxonomy" id="1140"/>
    <lineage>
        <taxon>Bacteria</taxon>
        <taxon>Bacillati</taxon>
        <taxon>Cyanobacteriota</taxon>
        <taxon>Cyanophyceae</taxon>
        <taxon>Synechococcales</taxon>
        <taxon>Synechococcaceae</taxon>
        <taxon>Synechococcus</taxon>
    </lineage>
</organism>